<name>SRR55_DROME</name>
<sequence length="376" mass="42813">MVGSRVYVGGLPYGVRERDLERFFKGYGRTRDILIKNGYGFVEFEDYRDADDAVYELNGKELLGERVVVEPARGTARGSNRDRYDDRYGGRRGGGGGRYNEKNKNSRSSSRYGPPLRTEYRLIVENLSSRVSWQDLKDYMRQAGEVTYADAHKQRRNEGVVEFASLSDMKTAIEKLDDTELNGRRIHLVEDRRGGRSGGGGGSGRGRSRSSSSRSRSRSRRRSRSRRSSHSRSKSRSRSKSRGGRSKSKSPVKSRSRSRSRSNKSRDVSKSKSKSHSRTRSRSPKRERDSRSRSRSVSKRESRSRSRSKSIHRDSRSRPPTVSFKSSFYKFTTMPFFCSDRSASAENKSRSRSRSRSASPKNGNASPDRNNESMDD</sequence>
<dbReference type="EMBL" id="X58720">
    <property type="protein sequence ID" value="CAA41556.1"/>
    <property type="molecule type" value="mRNA"/>
</dbReference>
<dbReference type="EMBL" id="X62599">
    <property type="protein sequence ID" value="CAA44483.1"/>
    <property type="molecule type" value="mRNA"/>
</dbReference>
<dbReference type="EMBL" id="AE014297">
    <property type="protein sequence ID" value="AAF54968.1"/>
    <property type="molecule type" value="Genomic_DNA"/>
</dbReference>
<dbReference type="EMBL" id="AE014297">
    <property type="protein sequence ID" value="AAF54969.2"/>
    <property type="molecule type" value="Genomic_DNA"/>
</dbReference>
<dbReference type="EMBL" id="AE014297">
    <property type="protein sequence ID" value="AAN13575.1"/>
    <property type="molecule type" value="Genomic_DNA"/>
</dbReference>
<dbReference type="EMBL" id="AE014297">
    <property type="protein sequence ID" value="AAN13577.1"/>
    <property type="molecule type" value="Genomic_DNA"/>
</dbReference>
<dbReference type="EMBL" id="AE014297">
    <property type="protein sequence ID" value="AAN13578.1"/>
    <property type="molecule type" value="Genomic_DNA"/>
</dbReference>
<dbReference type="EMBL" id="AE014297">
    <property type="protein sequence ID" value="ACZ94900.1"/>
    <property type="molecule type" value="Genomic_DNA"/>
</dbReference>
<dbReference type="EMBL" id="AE014297">
    <property type="protein sequence ID" value="ACZ94901.1"/>
    <property type="molecule type" value="Genomic_DNA"/>
</dbReference>
<dbReference type="EMBL" id="AY069302">
    <property type="protein sequence ID" value="AAL39447.1"/>
    <property type="molecule type" value="mRNA"/>
</dbReference>
<dbReference type="EMBL" id="AY113327">
    <property type="protein sequence ID" value="AAM29332.1"/>
    <property type="molecule type" value="mRNA"/>
</dbReference>
<dbReference type="EMBL" id="BT001417">
    <property type="protein sequence ID" value="AAN71172.1"/>
    <property type="molecule type" value="mRNA"/>
</dbReference>
<dbReference type="EMBL" id="BT001482">
    <property type="protein sequence ID" value="AAN71237.1"/>
    <property type="status" value="ALT_FRAME"/>
    <property type="molecule type" value="mRNA"/>
</dbReference>
<dbReference type="EMBL" id="BT001495">
    <property type="protein sequence ID" value="AAN71250.1"/>
    <property type="molecule type" value="mRNA"/>
</dbReference>
<dbReference type="EMBL" id="BT001750">
    <property type="protein sequence ID" value="AAN71505.1"/>
    <property type="molecule type" value="mRNA"/>
</dbReference>
<dbReference type="EMBL" id="BT003286">
    <property type="protein sequence ID" value="AAO25044.1"/>
    <property type="molecule type" value="mRNA"/>
</dbReference>
<dbReference type="EMBL" id="BT004500">
    <property type="protein sequence ID" value="AAO42664.1"/>
    <property type="molecule type" value="mRNA"/>
</dbReference>
<dbReference type="EMBL" id="BT125783">
    <property type="protein sequence ID" value="ADQ89797.1"/>
    <property type="molecule type" value="mRNA"/>
</dbReference>
<dbReference type="EMBL" id="S51722">
    <property type="protein sequence ID" value="AAB24629.1"/>
    <property type="molecule type" value="mRNA"/>
</dbReference>
<dbReference type="PIR" id="A37282">
    <property type="entry name" value="A37282"/>
</dbReference>
<dbReference type="PIR" id="A40459">
    <property type="entry name" value="A40459"/>
</dbReference>
<dbReference type="PIR" id="H48110">
    <property type="entry name" value="H48110"/>
</dbReference>
<dbReference type="RefSeq" id="NP_001014619.2">
    <molecule id="P26686-5"/>
    <property type="nucleotide sequence ID" value="NM_001014619.3"/>
</dbReference>
<dbReference type="RefSeq" id="NP_001163603.1">
    <molecule id="P26686-4"/>
    <property type="nucleotide sequence ID" value="NM_001170132.2"/>
</dbReference>
<dbReference type="RefSeq" id="NP_001163604.1">
    <molecule id="P26686-6"/>
    <property type="nucleotide sequence ID" value="NM_001170133.2"/>
</dbReference>
<dbReference type="RefSeq" id="NP_788665.1">
    <molecule id="P26686-2"/>
    <property type="nucleotide sequence ID" value="NM_176488.3"/>
</dbReference>
<dbReference type="RefSeq" id="NP_788666.1">
    <molecule id="P26686-2"/>
    <property type="nucleotide sequence ID" value="NM_176489.3"/>
</dbReference>
<dbReference type="RefSeq" id="NP_788667.2">
    <molecule id="P26686-2"/>
    <property type="nucleotide sequence ID" value="NM_176490.3"/>
</dbReference>
<dbReference type="RefSeq" id="NP_788668.1">
    <molecule id="P26686-3"/>
    <property type="nucleotide sequence ID" value="NM_176491.3"/>
</dbReference>
<dbReference type="RefSeq" id="NP_788669.1">
    <molecule id="P26686-4"/>
    <property type="nucleotide sequence ID" value="NM_176492.4"/>
</dbReference>
<dbReference type="RefSeq" id="NP_788670.1">
    <molecule id="P26686-6"/>
    <property type="nucleotide sequence ID" value="NM_176493.4"/>
</dbReference>
<dbReference type="RefSeq" id="NP_788671.2">
    <molecule id="P26686-5"/>
    <property type="nucleotide sequence ID" value="NM_176494.4"/>
</dbReference>
<dbReference type="SMR" id="P26686"/>
<dbReference type="BioGRID" id="66750">
    <property type="interactions" value="38"/>
</dbReference>
<dbReference type="FunCoup" id="P26686">
    <property type="interactions" value="2397"/>
</dbReference>
<dbReference type="IntAct" id="P26686">
    <property type="interactions" value="13"/>
</dbReference>
<dbReference type="STRING" id="7227.FBpp0300515"/>
<dbReference type="iPTMnet" id="P26686"/>
<dbReference type="PaxDb" id="7227-FBpp0300515"/>
<dbReference type="DNASU" id="41670"/>
<dbReference type="EnsemblMetazoa" id="FBtr0082801">
    <molecule id="P26686-2"/>
    <property type="protein sequence ID" value="FBpp0082269"/>
    <property type="gene ID" value="FBgn0004587"/>
</dbReference>
<dbReference type="EnsemblMetazoa" id="FBtr0082802">
    <molecule id="P26686-3"/>
    <property type="protein sequence ID" value="FBpp0082270"/>
    <property type="gene ID" value="FBgn0004587"/>
</dbReference>
<dbReference type="EnsemblMetazoa" id="FBtr0082803">
    <molecule id="P26686-4"/>
    <property type="protein sequence ID" value="FBpp0082271"/>
    <property type="gene ID" value="FBgn0004587"/>
</dbReference>
<dbReference type="EnsemblMetazoa" id="FBtr0082804">
    <molecule id="P26686-6"/>
    <property type="protein sequence ID" value="FBpp0082272"/>
    <property type="gene ID" value="FBgn0004587"/>
</dbReference>
<dbReference type="EnsemblMetazoa" id="FBtr0082806">
    <molecule id="P26686-2"/>
    <property type="protein sequence ID" value="FBpp0082274"/>
    <property type="gene ID" value="FBgn0004587"/>
</dbReference>
<dbReference type="EnsemblMetazoa" id="FBtr0300586">
    <molecule id="P26686-4"/>
    <property type="protein sequence ID" value="FBpp0289813"/>
    <property type="gene ID" value="FBgn0004587"/>
</dbReference>
<dbReference type="EnsemblMetazoa" id="FBtr0300588">
    <molecule id="P26686-6"/>
    <property type="protein sequence ID" value="FBpp0289815"/>
    <property type="gene ID" value="FBgn0004587"/>
</dbReference>
<dbReference type="EnsemblMetazoa" id="FBtr0308195">
    <molecule id="P26686-5"/>
    <property type="protein sequence ID" value="FBpp0300515"/>
    <property type="gene ID" value="FBgn0004587"/>
</dbReference>
<dbReference type="EnsemblMetazoa" id="FBtr0308196">
    <molecule id="P26686-2"/>
    <property type="protein sequence ID" value="FBpp0300516"/>
    <property type="gene ID" value="FBgn0004587"/>
</dbReference>
<dbReference type="EnsemblMetazoa" id="FBtr0308197">
    <molecule id="P26686-5"/>
    <property type="protein sequence ID" value="FBpp0300517"/>
    <property type="gene ID" value="FBgn0004587"/>
</dbReference>
<dbReference type="GeneID" id="41670"/>
<dbReference type="KEGG" id="dme:Dmel_CG10851"/>
<dbReference type="UCSC" id="CG10851-RC">
    <property type="organism name" value="d. melanogaster"/>
</dbReference>
<dbReference type="AGR" id="FB:FBgn0004587"/>
<dbReference type="CTD" id="41670"/>
<dbReference type="FlyBase" id="FBgn0004587">
    <property type="gene designation" value="B52"/>
</dbReference>
<dbReference type="VEuPathDB" id="VectorBase:FBgn0004587"/>
<dbReference type="eggNOG" id="KOG0106">
    <property type="taxonomic scope" value="Eukaryota"/>
</dbReference>
<dbReference type="GeneTree" id="ENSGT00940000156213"/>
<dbReference type="InParanoid" id="P26686"/>
<dbReference type="OMA" id="HQPAKAH"/>
<dbReference type="OrthoDB" id="1099063at2759"/>
<dbReference type="PhylomeDB" id="P26686"/>
<dbReference type="SignaLink" id="P26686"/>
<dbReference type="BioGRID-ORCS" id="41670">
    <property type="hits" value="2 hits in 3 CRISPR screens"/>
</dbReference>
<dbReference type="ChiTaRS" id="B52">
    <property type="organism name" value="fly"/>
</dbReference>
<dbReference type="GenomeRNAi" id="41670"/>
<dbReference type="PRO" id="PR:P26686"/>
<dbReference type="Proteomes" id="UP000000803">
    <property type="component" value="Chromosome 3R"/>
</dbReference>
<dbReference type="Bgee" id="FBgn0004587">
    <property type="expression patterns" value="Expressed in wing disc and 294 other cell types or tissues"/>
</dbReference>
<dbReference type="ExpressionAtlas" id="P26686">
    <property type="expression patterns" value="baseline and differential"/>
</dbReference>
<dbReference type="GO" id="GO:0071013">
    <property type="term" value="C:catalytic step 2 spliceosome"/>
    <property type="evidence" value="ECO:0007005"/>
    <property type="project" value="FlyBase"/>
</dbReference>
<dbReference type="GO" id="GO:0005737">
    <property type="term" value="C:cytoplasm"/>
    <property type="evidence" value="ECO:0000318"/>
    <property type="project" value="GO_Central"/>
</dbReference>
<dbReference type="GO" id="GO:0000791">
    <property type="term" value="C:euchromatin"/>
    <property type="evidence" value="ECO:0000314"/>
    <property type="project" value="FlyBase"/>
</dbReference>
<dbReference type="GO" id="GO:0016607">
    <property type="term" value="C:nuclear speck"/>
    <property type="evidence" value="ECO:0000314"/>
    <property type="project" value="FlyBase"/>
</dbReference>
<dbReference type="GO" id="GO:0005634">
    <property type="term" value="C:nucleus"/>
    <property type="evidence" value="ECO:0000314"/>
    <property type="project" value="FlyBase"/>
</dbReference>
<dbReference type="GO" id="GO:0005700">
    <property type="term" value="C:polytene chromosome"/>
    <property type="evidence" value="ECO:0000314"/>
    <property type="project" value="FlyBase"/>
</dbReference>
<dbReference type="GO" id="GO:0071011">
    <property type="term" value="C:precatalytic spliceosome"/>
    <property type="evidence" value="ECO:0007005"/>
    <property type="project" value="FlyBase"/>
</dbReference>
<dbReference type="GO" id="GO:0003729">
    <property type="term" value="F:mRNA binding"/>
    <property type="evidence" value="ECO:0000314"/>
    <property type="project" value="FlyBase"/>
</dbReference>
<dbReference type="GO" id="GO:0051607">
    <property type="term" value="P:defense response to virus"/>
    <property type="evidence" value="ECO:0000315"/>
    <property type="project" value="UniProtKB"/>
</dbReference>
<dbReference type="GO" id="GO:0000278">
    <property type="term" value="P:mitotic cell cycle"/>
    <property type="evidence" value="ECO:0007001"/>
    <property type="project" value="FlyBase"/>
</dbReference>
<dbReference type="GO" id="GO:0044819">
    <property type="term" value="P:mitotic G1/S transition checkpoint signaling"/>
    <property type="evidence" value="ECO:0000315"/>
    <property type="project" value="FlyBase"/>
</dbReference>
<dbReference type="GO" id="GO:0000398">
    <property type="term" value="P:mRNA splicing, via spliceosome"/>
    <property type="evidence" value="ECO:0000314"/>
    <property type="project" value="FlyBase"/>
</dbReference>
<dbReference type="GO" id="GO:0000381">
    <property type="term" value="P:regulation of alternative mRNA splicing, via spliceosome"/>
    <property type="evidence" value="ECO:0000315"/>
    <property type="project" value="FlyBase"/>
</dbReference>
<dbReference type="GO" id="GO:0010468">
    <property type="term" value="P:regulation of gene expression"/>
    <property type="evidence" value="ECO:0000315"/>
    <property type="project" value="FlyBase"/>
</dbReference>
<dbReference type="GO" id="GO:0031440">
    <property type="term" value="P:regulation of mRNA 3'-end processing"/>
    <property type="evidence" value="ECO:0000315"/>
    <property type="project" value="FlyBase"/>
</dbReference>
<dbReference type="GO" id="GO:0048024">
    <property type="term" value="P:regulation of mRNA splicing, via spliceosome"/>
    <property type="evidence" value="ECO:0000315"/>
    <property type="project" value="FlyBase"/>
</dbReference>
<dbReference type="GO" id="GO:0001178">
    <property type="term" value="P:regulation of transcriptional start site selection at RNA polymerase II promoter"/>
    <property type="evidence" value="ECO:0000315"/>
    <property type="project" value="FlyBase"/>
</dbReference>
<dbReference type="GO" id="GO:0008380">
    <property type="term" value="P:RNA splicing"/>
    <property type="evidence" value="ECO:0000315"/>
    <property type="project" value="FlyBase"/>
</dbReference>
<dbReference type="CDD" id="cd12337">
    <property type="entry name" value="RRM1_SRSF4_like"/>
    <property type="match status" value="1"/>
</dbReference>
<dbReference type="CDD" id="cd12600">
    <property type="entry name" value="RRM2_SRSF4_like"/>
    <property type="match status" value="1"/>
</dbReference>
<dbReference type="FunFam" id="3.30.70.330:FF:000028">
    <property type="entry name" value="Putative serine/arginine-rich splicing factor 4"/>
    <property type="match status" value="1"/>
</dbReference>
<dbReference type="FunFam" id="3.30.70.330:FF:000420">
    <property type="entry name" value="serine-arginine protein 55 isoform X1"/>
    <property type="match status" value="1"/>
</dbReference>
<dbReference type="Gene3D" id="3.30.70.330">
    <property type="match status" value="2"/>
</dbReference>
<dbReference type="InterPro" id="IPR012677">
    <property type="entry name" value="Nucleotide-bd_a/b_plait_sf"/>
</dbReference>
<dbReference type="InterPro" id="IPR035979">
    <property type="entry name" value="RBD_domain_sf"/>
</dbReference>
<dbReference type="InterPro" id="IPR047190">
    <property type="entry name" value="RRM2_SRSF4/6"/>
</dbReference>
<dbReference type="InterPro" id="IPR000504">
    <property type="entry name" value="RRM_dom"/>
</dbReference>
<dbReference type="PANTHER" id="PTHR48038">
    <property type="entry name" value="RIBONUCLEOPROTEIN RB97D"/>
    <property type="match status" value="1"/>
</dbReference>
<dbReference type="PANTHER" id="PTHR48038:SF3">
    <property type="entry name" value="SPLICING FACTOR, ARGININE_SERINE-RICH 1-RELATED"/>
    <property type="match status" value="1"/>
</dbReference>
<dbReference type="Pfam" id="PF00076">
    <property type="entry name" value="RRM_1"/>
    <property type="match status" value="2"/>
</dbReference>
<dbReference type="SMART" id="SM00360">
    <property type="entry name" value="RRM"/>
    <property type="match status" value="2"/>
</dbReference>
<dbReference type="SUPFAM" id="SSF54928">
    <property type="entry name" value="RNA-binding domain, RBD"/>
    <property type="match status" value="1"/>
</dbReference>
<dbReference type="PROSITE" id="PS50102">
    <property type="entry name" value="RRM"/>
    <property type="match status" value="2"/>
</dbReference>
<reference key="1">
    <citation type="journal article" date="1991" name="J. Cell Biol.">
        <title>A conserved family of nuclear phosphoproteins localized to sites of polymerase II transcription.</title>
        <authorList>
            <person name="Roth M.B."/>
            <person name="Zahler A.M."/>
            <person name="Stolk J.A."/>
        </authorList>
    </citation>
    <scope>NUCLEOTIDE SEQUENCE [MRNA] (ISOFORM A)</scope>
    <scope>PROTEIN SEQUENCE OF 2-15; 126-132 AND 137-148</scope>
    <scope>FUNCTION</scope>
    <scope>SUBCELLULAR LOCATION</scope>
    <scope>PHOSPHORYLATION</scope>
    <source>
        <strain>CL</strain>
        <tissue>Embryo</tissue>
    </source>
</reference>
<reference key="2">
    <citation type="journal article" date="1991" name="Genes Dev.">
        <title>Characterization of a Drosophila protein associated with boundaries of transcriptionally active chromatin.</title>
        <authorList>
            <person name="Champlin D.T."/>
            <person name="Frasch M."/>
            <person name="Saumweber H."/>
            <person name="Lis J.T."/>
        </authorList>
    </citation>
    <scope>NUCLEOTIDE SEQUENCE [MRNA] (ISOFORM LONG)</scope>
    <scope>SUBCELLULAR LOCATION</scope>
    <source>
        <tissue>Embryo</tissue>
    </source>
</reference>
<reference key="3">
    <citation type="journal article" date="2000" name="Science">
        <title>The genome sequence of Drosophila melanogaster.</title>
        <authorList>
            <person name="Adams M.D."/>
            <person name="Celniker S.E."/>
            <person name="Holt R.A."/>
            <person name="Evans C.A."/>
            <person name="Gocayne J.D."/>
            <person name="Amanatides P.G."/>
            <person name="Scherer S.E."/>
            <person name="Li P.W."/>
            <person name="Hoskins R.A."/>
            <person name="Galle R.F."/>
            <person name="George R.A."/>
            <person name="Lewis S.E."/>
            <person name="Richards S."/>
            <person name="Ashburner M."/>
            <person name="Henderson S.N."/>
            <person name="Sutton G.G."/>
            <person name="Wortman J.R."/>
            <person name="Yandell M.D."/>
            <person name="Zhang Q."/>
            <person name="Chen L.X."/>
            <person name="Brandon R.C."/>
            <person name="Rogers Y.-H.C."/>
            <person name="Blazej R.G."/>
            <person name="Champe M."/>
            <person name="Pfeiffer B.D."/>
            <person name="Wan K.H."/>
            <person name="Doyle C."/>
            <person name="Baxter E.G."/>
            <person name="Helt G."/>
            <person name="Nelson C.R."/>
            <person name="Miklos G.L.G."/>
            <person name="Abril J.F."/>
            <person name="Agbayani A."/>
            <person name="An H.-J."/>
            <person name="Andrews-Pfannkoch C."/>
            <person name="Baldwin D."/>
            <person name="Ballew R.M."/>
            <person name="Basu A."/>
            <person name="Baxendale J."/>
            <person name="Bayraktaroglu L."/>
            <person name="Beasley E.M."/>
            <person name="Beeson K.Y."/>
            <person name="Benos P.V."/>
            <person name="Berman B.P."/>
            <person name="Bhandari D."/>
            <person name="Bolshakov S."/>
            <person name="Borkova D."/>
            <person name="Botchan M.R."/>
            <person name="Bouck J."/>
            <person name="Brokstein P."/>
            <person name="Brottier P."/>
            <person name="Burtis K.C."/>
            <person name="Busam D.A."/>
            <person name="Butler H."/>
            <person name="Cadieu E."/>
            <person name="Center A."/>
            <person name="Chandra I."/>
            <person name="Cherry J.M."/>
            <person name="Cawley S."/>
            <person name="Dahlke C."/>
            <person name="Davenport L.B."/>
            <person name="Davies P."/>
            <person name="de Pablos B."/>
            <person name="Delcher A."/>
            <person name="Deng Z."/>
            <person name="Mays A.D."/>
            <person name="Dew I."/>
            <person name="Dietz S.M."/>
            <person name="Dodson K."/>
            <person name="Doup L.E."/>
            <person name="Downes M."/>
            <person name="Dugan-Rocha S."/>
            <person name="Dunkov B.C."/>
            <person name="Dunn P."/>
            <person name="Durbin K.J."/>
            <person name="Evangelista C.C."/>
            <person name="Ferraz C."/>
            <person name="Ferriera S."/>
            <person name="Fleischmann W."/>
            <person name="Fosler C."/>
            <person name="Gabrielian A.E."/>
            <person name="Garg N.S."/>
            <person name="Gelbart W.M."/>
            <person name="Glasser K."/>
            <person name="Glodek A."/>
            <person name="Gong F."/>
            <person name="Gorrell J.H."/>
            <person name="Gu Z."/>
            <person name="Guan P."/>
            <person name="Harris M."/>
            <person name="Harris N.L."/>
            <person name="Harvey D.A."/>
            <person name="Heiman T.J."/>
            <person name="Hernandez J.R."/>
            <person name="Houck J."/>
            <person name="Hostin D."/>
            <person name="Houston K.A."/>
            <person name="Howland T.J."/>
            <person name="Wei M.-H."/>
            <person name="Ibegwam C."/>
            <person name="Jalali M."/>
            <person name="Kalush F."/>
            <person name="Karpen G.H."/>
            <person name="Ke Z."/>
            <person name="Kennison J.A."/>
            <person name="Ketchum K.A."/>
            <person name="Kimmel B.E."/>
            <person name="Kodira C.D."/>
            <person name="Kraft C.L."/>
            <person name="Kravitz S."/>
            <person name="Kulp D."/>
            <person name="Lai Z."/>
            <person name="Lasko P."/>
            <person name="Lei Y."/>
            <person name="Levitsky A.A."/>
            <person name="Li J.H."/>
            <person name="Li Z."/>
            <person name="Liang Y."/>
            <person name="Lin X."/>
            <person name="Liu X."/>
            <person name="Mattei B."/>
            <person name="McIntosh T.C."/>
            <person name="McLeod M.P."/>
            <person name="McPherson D."/>
            <person name="Merkulov G."/>
            <person name="Milshina N.V."/>
            <person name="Mobarry C."/>
            <person name="Morris J."/>
            <person name="Moshrefi A."/>
            <person name="Mount S.M."/>
            <person name="Moy M."/>
            <person name="Murphy B."/>
            <person name="Murphy L."/>
            <person name="Muzny D.M."/>
            <person name="Nelson D.L."/>
            <person name="Nelson D.R."/>
            <person name="Nelson K.A."/>
            <person name="Nixon K."/>
            <person name="Nusskern D.R."/>
            <person name="Pacleb J.M."/>
            <person name="Palazzolo M."/>
            <person name="Pittman G.S."/>
            <person name="Pan S."/>
            <person name="Pollard J."/>
            <person name="Puri V."/>
            <person name="Reese M.G."/>
            <person name="Reinert K."/>
            <person name="Remington K."/>
            <person name="Saunders R.D.C."/>
            <person name="Scheeler F."/>
            <person name="Shen H."/>
            <person name="Shue B.C."/>
            <person name="Siden-Kiamos I."/>
            <person name="Simpson M."/>
            <person name="Skupski M.P."/>
            <person name="Smith T.J."/>
            <person name="Spier E."/>
            <person name="Spradling A.C."/>
            <person name="Stapleton M."/>
            <person name="Strong R."/>
            <person name="Sun E."/>
            <person name="Svirskas R."/>
            <person name="Tector C."/>
            <person name="Turner R."/>
            <person name="Venter E."/>
            <person name="Wang A.H."/>
            <person name="Wang X."/>
            <person name="Wang Z.-Y."/>
            <person name="Wassarman D.A."/>
            <person name="Weinstock G.M."/>
            <person name="Weissenbach J."/>
            <person name="Williams S.M."/>
            <person name="Woodage T."/>
            <person name="Worley K.C."/>
            <person name="Wu D."/>
            <person name="Yang S."/>
            <person name="Yao Q.A."/>
            <person name="Ye J."/>
            <person name="Yeh R.-F."/>
            <person name="Zaveri J.S."/>
            <person name="Zhan M."/>
            <person name="Zhang G."/>
            <person name="Zhao Q."/>
            <person name="Zheng L."/>
            <person name="Zheng X.H."/>
            <person name="Zhong F.N."/>
            <person name="Zhong W."/>
            <person name="Zhou X."/>
            <person name="Zhu S.C."/>
            <person name="Zhu X."/>
            <person name="Smith H.O."/>
            <person name="Gibbs R.A."/>
            <person name="Myers E.W."/>
            <person name="Rubin G.M."/>
            <person name="Venter J.C."/>
        </authorList>
    </citation>
    <scope>NUCLEOTIDE SEQUENCE [LARGE SCALE GENOMIC DNA]</scope>
    <source>
        <strain>Berkeley</strain>
    </source>
</reference>
<reference key="4">
    <citation type="journal article" date="2002" name="Genome Biol.">
        <title>Annotation of the Drosophila melanogaster euchromatic genome: a systematic review.</title>
        <authorList>
            <person name="Misra S."/>
            <person name="Crosby M.A."/>
            <person name="Mungall C.J."/>
            <person name="Matthews B.B."/>
            <person name="Campbell K.S."/>
            <person name="Hradecky P."/>
            <person name="Huang Y."/>
            <person name="Kaminker J.S."/>
            <person name="Millburn G.H."/>
            <person name="Prochnik S.E."/>
            <person name="Smith C.D."/>
            <person name="Tupy J.L."/>
            <person name="Whitfield E.J."/>
            <person name="Bayraktaroglu L."/>
            <person name="Berman B.P."/>
            <person name="Bettencourt B.R."/>
            <person name="Celniker S.E."/>
            <person name="de Grey A.D.N.J."/>
            <person name="Drysdale R.A."/>
            <person name="Harris N.L."/>
            <person name="Richter J."/>
            <person name="Russo S."/>
            <person name="Schroeder A.J."/>
            <person name="Shu S.Q."/>
            <person name="Stapleton M."/>
            <person name="Yamada C."/>
            <person name="Ashburner M."/>
            <person name="Gelbart W.M."/>
            <person name="Rubin G.M."/>
            <person name="Lewis S.E."/>
        </authorList>
    </citation>
    <scope>GENOME REANNOTATION</scope>
    <scope>ALTERNATIVE SPLICING</scope>
    <source>
        <strain>Berkeley</strain>
    </source>
</reference>
<reference key="5">
    <citation type="journal article" date="2002" name="Genome Biol.">
        <title>A Drosophila full-length cDNA resource.</title>
        <authorList>
            <person name="Stapleton M."/>
            <person name="Carlson J.W."/>
            <person name="Brokstein P."/>
            <person name="Yu C."/>
            <person name="Champe M."/>
            <person name="George R.A."/>
            <person name="Guarin H."/>
            <person name="Kronmiller B."/>
            <person name="Pacleb J.M."/>
            <person name="Park S."/>
            <person name="Wan K.H."/>
            <person name="Rubin G.M."/>
            <person name="Celniker S.E."/>
        </authorList>
    </citation>
    <scope>NUCLEOTIDE SEQUENCE [LARGE SCALE MRNA] (ISOFORMS A AND G)</scope>
    <source>
        <strain>Berkeley</strain>
        <tissue>Embryo</tissue>
        <tissue>Head</tissue>
        <tissue>Testis</tissue>
    </source>
</reference>
<reference key="6">
    <citation type="submission" date="2010-11" db="EMBL/GenBank/DDBJ databases">
        <authorList>
            <person name="Stapleton M."/>
            <person name="Brokstein P."/>
            <person name="Hong L."/>
            <person name="Agbayani A."/>
            <person name="Carlson J.W."/>
            <person name="Booth B."/>
            <person name="Champe M."/>
            <person name="Chavez C."/>
            <person name="Dorsett V."/>
            <person name="Dresnek D."/>
            <person name="Farfan D."/>
            <person name="Frise E."/>
            <person name="George R.A."/>
            <person name="Gonzalez M."/>
            <person name="Guarin H."/>
            <person name="Kronmiller B."/>
            <person name="Li P.W."/>
            <person name="Liao G."/>
            <person name="Miranda A."/>
            <person name="Mungall C.J."/>
            <person name="Nunoo J."/>
            <person name="Pacleb J.M."/>
            <person name="Paragas V."/>
            <person name="Park S."/>
            <person name="Patel S."/>
            <person name="Phouanenavong S."/>
            <person name="Wan K.H."/>
            <person name="Yu C."/>
            <person name="Lewis S.E."/>
            <person name="Rubin G.M."/>
            <person name="Celniker S.E."/>
        </authorList>
    </citation>
    <scope>NUCLEOTIDE SEQUENCE [LARGE SCALE MRNA] (ISOFORMS A; E AND G)</scope>
    <source>
        <strain>Berkeley</strain>
        <tissue>Head</tissue>
        <tissue>Ovary</tissue>
    </source>
</reference>
<reference key="7">
    <citation type="journal article" date="1993" name="Mol. Cell. Biol.">
        <title>Isolation of RRM-type RNA-binding protein genes and the analysis of their relatedness by using a numerical approach.</title>
        <authorList>
            <person name="Kim Y.-J."/>
            <person name="Baker B.S."/>
        </authorList>
    </citation>
    <scope>NUCLEOTIDE SEQUENCE [MRNA] OF 7-42</scope>
</reference>
<reference key="8">
    <citation type="journal article" date="1992" name="Proc. Natl. Acad. Sci. U.S.A.">
        <title>Two members of a conserved family of nuclear phosphoproteins are involved in pre-mRNA splicing.</title>
        <authorList>
            <person name="Mayeda A."/>
            <person name="Zahler A.M."/>
            <person name="Krainer A.R."/>
            <person name="Roth M.B."/>
        </authorList>
    </citation>
    <scope>FUNCTION</scope>
    <scope>SUBCELLULAR LOCATION</scope>
</reference>
<reference key="9">
    <citation type="journal article" date="1994" name="Mol. Cell. Biol.">
        <title>The SR protein B52/SRp55 is essential for Drosophila development.</title>
        <authorList>
            <person name="Ring H.Z."/>
            <person name="Lis J.T."/>
        </authorList>
    </citation>
    <scope>FUNCTION</scope>
    <scope>DEVELOPMENTAL STAGE</scope>
</reference>
<reference key="10">
    <citation type="journal article" date="2008" name="J. Proteome Res.">
        <title>Phosphoproteome analysis of Drosophila melanogaster embryos.</title>
        <authorList>
            <person name="Zhai B."/>
            <person name="Villen J."/>
            <person name="Beausoleil S.A."/>
            <person name="Mintseris J."/>
            <person name="Gygi S.P."/>
        </authorList>
    </citation>
    <scope>PHOSPHORYLATION [LARGE SCALE ANALYSIS] AT SER-165</scope>
    <scope>IDENTIFICATION BY MASS SPECTROMETRY</scope>
    <source>
        <tissue>Embryo</tissue>
    </source>
</reference>
<comment type="function">
    <text evidence="3 4 7">Essential for development. May have a critical role in splicing or in controlling alternative splice site use of at least some pre-mRNA in vivo. Not required for all splicing. May play a general role in the condensation or decondensation of chromatin.</text>
</comment>
<comment type="subcellular location">
    <subcellularLocation>
        <location evidence="3 4 6">Nucleus</location>
    </subcellularLocation>
    <text>Associated with boundaries of transcriptionally active chromatin.</text>
</comment>
<comment type="alternative products">
    <event type="alternative splicing"/>
    <isoform>
        <id>P26686-1</id>
        <name>Long</name>
        <sequence type="displayed"/>
    </isoform>
    <isoform>
        <id>P26686-2</id>
        <name>A</name>
        <name>C</name>
        <sequence type="described" ref="VSP_015926 VSP_005878"/>
    </isoform>
    <isoform>
        <id>P26686-3</id>
        <name>B</name>
        <sequence type="described" ref="VSP_015932"/>
    </isoform>
    <isoform>
        <id>P26686-4</id>
        <name evidence="12">D</name>
        <name evidence="12">I</name>
        <sequence type="described" ref="VSP_015926 VSP_015929 VSP_015930"/>
    </isoform>
    <isoform>
        <id>P26686-5</id>
        <name>E</name>
        <sequence type="described" ref="VSP_005878"/>
    </isoform>
    <isoform>
        <id>P26686-6</id>
        <name>F</name>
        <name>K</name>
        <sequence type="described" ref="VSP_015926 VSP_015928 VSP_015931"/>
    </isoform>
    <isoform>
        <id>P26686-7</id>
        <name>G</name>
        <name>H</name>
        <sequence type="described" ref="VSP_015924 VSP_005878"/>
    </isoform>
</comment>
<comment type="developmental stage">
    <text evidence="7">Expressed throughout development.</text>
</comment>
<comment type="PTM">
    <text evidence="3 5">Extensively phosphorylated on serine residues in the RS domain.</text>
</comment>
<comment type="similarity">
    <text evidence="11">Belongs to the splicing factor SR family.</text>
</comment>
<comment type="sequence caution" evidence="11">
    <conflict type="frameshift">
        <sequence resource="EMBL-CDS" id="AAN71237"/>
    </conflict>
</comment>
<gene>
    <name type="primary">B52</name>
    <name type="synonym">E(Dfd)</name>
    <name type="synonym">RS55</name>
    <name type="synonym">SR55</name>
    <name type="ORF">CG10851</name>
</gene>
<keyword id="KW-0025">Alternative splicing</keyword>
<keyword id="KW-0903">Direct protein sequencing</keyword>
<keyword id="KW-0507">mRNA processing</keyword>
<keyword id="KW-0508">mRNA splicing</keyword>
<keyword id="KW-0539">Nucleus</keyword>
<keyword id="KW-0597">Phosphoprotein</keyword>
<keyword id="KW-1185">Reference proteome</keyword>
<keyword id="KW-0677">Repeat</keyword>
<keyword id="KW-0694">RNA-binding</keyword>
<evidence type="ECO:0000255" key="1">
    <source>
        <dbReference type="PROSITE-ProRule" id="PRU00176"/>
    </source>
</evidence>
<evidence type="ECO:0000256" key="2">
    <source>
        <dbReference type="SAM" id="MobiDB-lite"/>
    </source>
</evidence>
<evidence type="ECO:0000269" key="3">
    <source>
    </source>
</evidence>
<evidence type="ECO:0000269" key="4">
    <source>
    </source>
</evidence>
<evidence type="ECO:0000269" key="5">
    <source>
    </source>
</evidence>
<evidence type="ECO:0000269" key="6">
    <source>
    </source>
</evidence>
<evidence type="ECO:0000269" key="7">
    <source>
    </source>
</evidence>
<evidence type="ECO:0000303" key="8">
    <source>
    </source>
</evidence>
<evidence type="ECO:0000303" key="9">
    <source>
    </source>
</evidence>
<evidence type="ECO:0000303" key="10">
    <source ref="6"/>
</evidence>
<evidence type="ECO:0000305" key="11"/>
<evidence type="ECO:0000312" key="12">
    <source>
        <dbReference type="FlyBase" id="FBgn0004587"/>
    </source>
</evidence>
<feature type="initiator methionine" description="Removed" evidence="3">
    <location>
        <position position="1"/>
    </location>
</feature>
<feature type="chain" id="PRO_0000081961" description="Serine-arginine protein 55">
    <location>
        <begin position="2"/>
        <end position="376"/>
    </location>
</feature>
<feature type="domain" description="RRM 1" evidence="1">
    <location>
        <begin position="4"/>
        <end position="74"/>
    </location>
</feature>
<feature type="domain" description="RRM 2" evidence="1">
    <location>
        <begin position="120"/>
        <end position="193"/>
    </location>
</feature>
<feature type="region of interest" description="Disordered" evidence="2">
    <location>
        <begin position="73"/>
        <end position="114"/>
    </location>
</feature>
<feature type="region of interest" description="Disordered" evidence="2">
    <location>
        <begin position="185"/>
        <end position="376"/>
    </location>
</feature>
<feature type="compositionally biased region" description="Basic and acidic residues" evidence="2">
    <location>
        <begin position="79"/>
        <end position="89"/>
    </location>
</feature>
<feature type="compositionally biased region" description="Basic and acidic residues" evidence="2">
    <location>
        <begin position="185"/>
        <end position="194"/>
    </location>
</feature>
<feature type="compositionally biased region" description="Gly residues" evidence="2">
    <location>
        <begin position="196"/>
        <end position="205"/>
    </location>
</feature>
<feature type="compositionally biased region" description="Basic residues" evidence="2">
    <location>
        <begin position="215"/>
        <end position="263"/>
    </location>
</feature>
<feature type="compositionally biased region" description="Basic residues" evidence="2">
    <location>
        <begin position="271"/>
        <end position="283"/>
    </location>
</feature>
<feature type="compositionally biased region" description="Basic and acidic residues" evidence="2">
    <location>
        <begin position="284"/>
        <end position="304"/>
    </location>
</feature>
<feature type="modified residue" description="Phosphoserine" evidence="5">
    <location>
        <position position="165"/>
    </location>
</feature>
<feature type="splice variant" id="VSP_015924" description="In isoform G." evidence="8 10">
    <location>
        <begin position="1"/>
        <end position="139"/>
    </location>
</feature>
<feature type="splice variant" id="VSP_015926" description="In isoform A, isoform D and isoform F." evidence="8 9 10">
    <location>
        <begin position="103"/>
        <end position="107"/>
    </location>
</feature>
<feature type="splice variant" id="VSP_015928" description="In isoform F." evidence="11">
    <original>DLKDYMRQAGEVTYADAH</original>
    <variation>VSEHGSMYRALGVVYTVA</variation>
    <location>
        <begin position="135"/>
        <end position="152"/>
    </location>
</feature>
<feature type="splice variant" id="VSP_015929" description="In isoform D." evidence="11">
    <original>DLKDYM</original>
    <variation>SLMCFD</variation>
    <location>
        <begin position="135"/>
        <end position="140"/>
    </location>
</feature>
<feature type="splice variant" id="VSP_015930" description="In isoform D." evidence="11">
    <location>
        <begin position="141"/>
        <end position="376"/>
    </location>
</feature>
<feature type="splice variant" id="VSP_015931" description="In isoform F." evidence="11">
    <location>
        <begin position="153"/>
        <end position="376"/>
    </location>
</feature>
<feature type="splice variant" id="VSP_005878" description="In isoform A, isoform E and isoform G." evidence="8 9 10">
    <location>
        <begin position="319"/>
        <end position="339"/>
    </location>
</feature>
<feature type="splice variant" id="VSP_015932" description="In isoform B." evidence="11">
    <original>SFKSSFYKFTTMPFFCSDRSASAENKSRSRSRSRSASPKNGNASPDRNNESMDD</original>
    <variation>VVQKLVL</variation>
    <location>
        <begin position="323"/>
        <end position="376"/>
    </location>
</feature>
<feature type="sequence conflict" description="In Ref. 7; AAB24629." evidence="11" ref="7">
    <original>Y</original>
    <variation>F</variation>
    <location>
        <position position="7"/>
    </location>
</feature>
<feature type="sequence conflict" description="In Ref. 7; AAB24629." evidence="11" ref="7">
    <original>ER</original>
    <variation>AA</variation>
    <location>
        <begin position="17"/>
        <end position="18"/>
    </location>
</feature>
<feature type="sequence conflict" description="In Ref. 7; AAB24629." evidence="11" ref="7">
    <original>GFV</original>
    <variation>AFM</variation>
    <location>
        <begin position="40"/>
        <end position="42"/>
    </location>
</feature>
<feature type="sequence conflict" description="In Ref. 1; CAA41556." evidence="11" ref="1">
    <original>T</original>
    <variation>S</variation>
    <location>
        <position position="75"/>
    </location>
</feature>
<feature type="sequence conflict" description="In Ref. 2; CAA44483." evidence="11" ref="2">
    <original>R</original>
    <variation>A</variation>
    <location>
        <position position="196"/>
    </location>
</feature>
<feature type="sequence conflict" description="In Ref. 2; CAA44483." evidence="11" ref="2">
    <original>S</original>
    <variation>T</variation>
    <location>
        <position position="229"/>
    </location>
</feature>
<feature type="sequence conflict" description="In Ref. 2; CAA44483." evidence="11" ref="2">
    <original>R</original>
    <variation>A</variation>
    <location>
        <position position="261"/>
    </location>
</feature>
<feature type="sequence conflict" description="In Ref. 2; CAA44483." evidence="11" ref="2">
    <original>RSR</original>
    <variation>APV</variation>
    <location>
        <begin position="280"/>
        <end position="282"/>
    </location>
</feature>
<feature type="sequence conflict" description="In Ref. 1; CAA41556." evidence="11" ref="1">
    <original>S</original>
    <variation>T</variation>
    <location>
        <position position="294"/>
    </location>
</feature>
<accession>P26686</accession>
<accession>A4V2U2</accession>
<accession>E1JIK1</accession>
<accession>E1JIK2</accession>
<accession>E1JIK3</accession>
<accession>E4NKI6</accession>
<accession>Q24252</accession>
<accession>Q26277</accession>
<accession>Q8IH12</accession>
<accession>Q8ING7</accession>
<accession>Q8ING8</accession>
<accession>Q8ING9</accession>
<accession>Q8MZ66</accession>
<accession>Q8T0I0</accession>
<accession>Q9VFT0</accession>
<accession>Q9VFT1</accession>
<organism>
    <name type="scientific">Drosophila melanogaster</name>
    <name type="common">Fruit fly</name>
    <dbReference type="NCBI Taxonomy" id="7227"/>
    <lineage>
        <taxon>Eukaryota</taxon>
        <taxon>Metazoa</taxon>
        <taxon>Ecdysozoa</taxon>
        <taxon>Arthropoda</taxon>
        <taxon>Hexapoda</taxon>
        <taxon>Insecta</taxon>
        <taxon>Pterygota</taxon>
        <taxon>Neoptera</taxon>
        <taxon>Endopterygota</taxon>
        <taxon>Diptera</taxon>
        <taxon>Brachycera</taxon>
        <taxon>Muscomorpha</taxon>
        <taxon>Ephydroidea</taxon>
        <taxon>Drosophilidae</taxon>
        <taxon>Drosophila</taxon>
        <taxon>Sophophora</taxon>
    </lineage>
</organism>
<protein>
    <recommendedName>
        <fullName>Serine-arginine protein 55</fullName>
        <shortName>SRP55</shortName>
    </recommendedName>
    <alternativeName>
        <fullName>52 kDa bracketing protein</fullName>
    </alternativeName>
    <alternativeName>
        <fullName>B52 protein</fullName>
    </alternativeName>
    <alternativeName>
        <fullName>Protein enhancer of deformed</fullName>
    </alternativeName>
</protein>
<proteinExistence type="evidence at protein level"/>